<keyword id="KW-0240">DNA-directed RNA polymerase</keyword>
<keyword id="KW-0460">Magnesium</keyword>
<keyword id="KW-0479">Metal-binding</keyword>
<keyword id="KW-0548">Nucleotidyltransferase</keyword>
<keyword id="KW-0804">Transcription</keyword>
<keyword id="KW-0808">Transferase</keyword>
<keyword id="KW-0862">Zinc</keyword>
<protein>
    <recommendedName>
        <fullName evidence="1">DNA-directed RNA polymerase subunit beta'</fullName>
        <shortName evidence="1">RNAP subunit beta'</shortName>
        <ecNumber evidence="1">2.7.7.6</ecNumber>
    </recommendedName>
    <alternativeName>
        <fullName evidence="1">RNA polymerase subunit beta'</fullName>
    </alternativeName>
    <alternativeName>
        <fullName evidence="1">Transcriptase subunit beta'</fullName>
    </alternativeName>
</protein>
<feature type="chain" id="PRO_0000353293" description="DNA-directed RNA polymerase subunit beta'">
    <location>
        <begin position="1"/>
        <end position="1199"/>
    </location>
</feature>
<feature type="binding site" evidence="1">
    <location>
        <position position="60"/>
    </location>
    <ligand>
        <name>Zn(2+)</name>
        <dbReference type="ChEBI" id="CHEBI:29105"/>
        <label>1</label>
    </ligand>
</feature>
<feature type="binding site" evidence="1">
    <location>
        <position position="62"/>
    </location>
    <ligand>
        <name>Zn(2+)</name>
        <dbReference type="ChEBI" id="CHEBI:29105"/>
        <label>1</label>
    </ligand>
</feature>
<feature type="binding site" evidence="1">
    <location>
        <position position="75"/>
    </location>
    <ligand>
        <name>Zn(2+)</name>
        <dbReference type="ChEBI" id="CHEBI:29105"/>
        <label>1</label>
    </ligand>
</feature>
<feature type="binding site" evidence="1">
    <location>
        <position position="78"/>
    </location>
    <ligand>
        <name>Zn(2+)</name>
        <dbReference type="ChEBI" id="CHEBI:29105"/>
        <label>1</label>
    </ligand>
</feature>
<feature type="binding site" evidence="1">
    <location>
        <position position="449"/>
    </location>
    <ligand>
        <name>Mg(2+)</name>
        <dbReference type="ChEBI" id="CHEBI:18420"/>
    </ligand>
</feature>
<feature type="binding site" evidence="1">
    <location>
        <position position="451"/>
    </location>
    <ligand>
        <name>Mg(2+)</name>
        <dbReference type="ChEBI" id="CHEBI:18420"/>
    </ligand>
</feature>
<feature type="binding site" evidence="1">
    <location>
        <position position="453"/>
    </location>
    <ligand>
        <name>Mg(2+)</name>
        <dbReference type="ChEBI" id="CHEBI:18420"/>
    </ligand>
</feature>
<feature type="binding site" evidence="1">
    <location>
        <position position="818"/>
    </location>
    <ligand>
        <name>Zn(2+)</name>
        <dbReference type="ChEBI" id="CHEBI:29105"/>
        <label>2</label>
    </ligand>
</feature>
<feature type="binding site" evidence="1">
    <location>
        <position position="892"/>
    </location>
    <ligand>
        <name>Zn(2+)</name>
        <dbReference type="ChEBI" id="CHEBI:29105"/>
        <label>2</label>
    </ligand>
</feature>
<feature type="binding site" evidence="1">
    <location>
        <position position="899"/>
    </location>
    <ligand>
        <name>Zn(2+)</name>
        <dbReference type="ChEBI" id="CHEBI:29105"/>
        <label>2</label>
    </ligand>
</feature>
<feature type="binding site" evidence="1">
    <location>
        <position position="902"/>
    </location>
    <ligand>
        <name>Zn(2+)</name>
        <dbReference type="ChEBI" id="CHEBI:29105"/>
        <label>2</label>
    </ligand>
</feature>
<accession>A8F977</accession>
<gene>
    <name evidence="1" type="primary">rpoC</name>
    <name type="ordered locus">BPUM_0094</name>
</gene>
<evidence type="ECO:0000255" key="1">
    <source>
        <dbReference type="HAMAP-Rule" id="MF_01322"/>
    </source>
</evidence>
<proteinExistence type="inferred from homology"/>
<sequence>MLDVNNFEYMNIGLASPDKIRSWSFGEVKKPETINYRTLKPEKDGLFCERIFGPQKDWECHCGKYKRVRYKGVVCDRCGVEVTRAKVRRERMGHIELAAPVSHIWYFKGIPSRMGLVLDMSPRALEEVIYFASYVVTDPGNTPLEKKQLLSEKEFRAYLDKYGNTFSAAMGAEAINKLLQDIDLVKEVDTLKEELKTAQGQRRTRAIKRLEVLEAFRNSGNKPSWMILDVLPVIPPELRPMVQLDGGRFATSDLNDLYRRVINRNNRLKRLLDLGAPSIIVQNEKRMLQEAVDALIDNGRRGRPVTGPGNRPLKSLSHMLKGKQGRFRQNLLGKRVDYSGRSVIVVGPHLKMYQCGLPKEMALELFKPFVMKELVEKGLAHNIKSAKRKIERVQPEVWDVLESVIREHPVLLNRAPTLHRLGIQAFEPTLVEGRAIRLHPLVCTAYNADFDGDQMAVHVPLSAEAQAEARILMLAAQNILNPKDGKPVVTPSQDMVLGNYYLTLERKGAIGEGMVFKDTNEALLAYQNGYVHLHTRVAVAANSLKNVTFTDEQRSKLLITTVGKLIFNEILPESFPYMNEPTKSNIEEKTPDRFFLEKGEDVKATIEKQEINAPFKKGILGKIIAEIFKRFHITETSKMLDRMKNLGFKYSTKAGITVGVSDIVVLDDKQKILEEAQAKVDNVMKQFRRGLITEEERYERVISIWSSSKDVIQGKLMKSLDEVNPIYMMSDSGARGNASNFTQLAGMRGLMANPAGRIIELPIKSSFREGLTVLEYFISTHGARKGLADTALKTADSGYLTRRLVDVAQDVIIRETDCGTDRGILAKSIREGNEIIEKLEERLIGRFARKPIVHPETGEVIVGENELIDEDKALEVVEAGIEEVWIRSAFTCNTPHGVCKRCYGRNLATGTDVEVGEAVGIIAAQSIGEPGTQLTMRTFHTGGVAGDDITQGLPRIQELFEARNPKGQATISEIDGVVAEINDVRDKQQEIVVQGDVETRSYTAPYNARLKVVEGDKVTRGQVLTEGSIDPKELLKVTDMTAVQEYLLHEVQKVYRMQGVEIGDKHVEVMVRQMLRKVRVADAGDTDVLPGTLLDVHQFTEANKKVLFEGKRPATGRPVLLGITKASLETDSFLSAASFQETTRVLTDAAIKGKRDELLGLKENVIIGKLVPAGTGMPNYRKVKPVSQVQPSDDMVPVE</sequence>
<name>RPOC_BACP2</name>
<comment type="function">
    <text evidence="1">DNA-dependent RNA polymerase catalyzes the transcription of DNA into RNA using the four ribonucleoside triphosphates as substrates.</text>
</comment>
<comment type="catalytic activity">
    <reaction evidence="1">
        <text>RNA(n) + a ribonucleoside 5'-triphosphate = RNA(n+1) + diphosphate</text>
        <dbReference type="Rhea" id="RHEA:21248"/>
        <dbReference type="Rhea" id="RHEA-COMP:14527"/>
        <dbReference type="Rhea" id="RHEA-COMP:17342"/>
        <dbReference type="ChEBI" id="CHEBI:33019"/>
        <dbReference type="ChEBI" id="CHEBI:61557"/>
        <dbReference type="ChEBI" id="CHEBI:140395"/>
        <dbReference type="EC" id="2.7.7.6"/>
    </reaction>
</comment>
<comment type="cofactor">
    <cofactor evidence="1">
        <name>Mg(2+)</name>
        <dbReference type="ChEBI" id="CHEBI:18420"/>
    </cofactor>
    <text evidence="1">Binds 1 Mg(2+) ion per subunit.</text>
</comment>
<comment type="cofactor">
    <cofactor evidence="1">
        <name>Zn(2+)</name>
        <dbReference type="ChEBI" id="CHEBI:29105"/>
    </cofactor>
    <text evidence="1">Binds 2 Zn(2+) ions per subunit.</text>
</comment>
<comment type="subunit">
    <text evidence="1">The RNAP catalytic core consists of 2 alpha, 1 beta, 1 beta' and 1 omega subunit. When a sigma factor is associated with the core the holoenzyme is formed, which can initiate transcription.</text>
</comment>
<comment type="similarity">
    <text evidence="1">Belongs to the RNA polymerase beta' chain family.</text>
</comment>
<dbReference type="EC" id="2.7.7.6" evidence="1"/>
<dbReference type="EMBL" id="CP000813">
    <property type="protein sequence ID" value="ABV60794.1"/>
    <property type="molecule type" value="Genomic_DNA"/>
</dbReference>
<dbReference type="RefSeq" id="WP_012008699.1">
    <property type="nucleotide sequence ID" value="NZ_VEIS01000020.1"/>
</dbReference>
<dbReference type="SMR" id="A8F977"/>
<dbReference type="STRING" id="315750.BPUM_0094"/>
<dbReference type="GeneID" id="5619336"/>
<dbReference type="KEGG" id="bpu:BPUM_0094"/>
<dbReference type="eggNOG" id="COG0086">
    <property type="taxonomic scope" value="Bacteria"/>
</dbReference>
<dbReference type="HOGENOM" id="CLU_000524_3_1_9"/>
<dbReference type="OrthoDB" id="9815296at2"/>
<dbReference type="Proteomes" id="UP000001355">
    <property type="component" value="Chromosome"/>
</dbReference>
<dbReference type="GO" id="GO:0000428">
    <property type="term" value="C:DNA-directed RNA polymerase complex"/>
    <property type="evidence" value="ECO:0007669"/>
    <property type="project" value="UniProtKB-KW"/>
</dbReference>
<dbReference type="GO" id="GO:0003677">
    <property type="term" value="F:DNA binding"/>
    <property type="evidence" value="ECO:0007669"/>
    <property type="project" value="UniProtKB-UniRule"/>
</dbReference>
<dbReference type="GO" id="GO:0003899">
    <property type="term" value="F:DNA-directed RNA polymerase activity"/>
    <property type="evidence" value="ECO:0007669"/>
    <property type="project" value="UniProtKB-UniRule"/>
</dbReference>
<dbReference type="GO" id="GO:0000287">
    <property type="term" value="F:magnesium ion binding"/>
    <property type="evidence" value="ECO:0007669"/>
    <property type="project" value="UniProtKB-UniRule"/>
</dbReference>
<dbReference type="GO" id="GO:0008270">
    <property type="term" value="F:zinc ion binding"/>
    <property type="evidence" value="ECO:0007669"/>
    <property type="project" value="UniProtKB-UniRule"/>
</dbReference>
<dbReference type="GO" id="GO:0006351">
    <property type="term" value="P:DNA-templated transcription"/>
    <property type="evidence" value="ECO:0007669"/>
    <property type="project" value="UniProtKB-UniRule"/>
</dbReference>
<dbReference type="CDD" id="cd02655">
    <property type="entry name" value="RNAP_beta'_C"/>
    <property type="match status" value="1"/>
</dbReference>
<dbReference type="CDD" id="cd01609">
    <property type="entry name" value="RNAP_beta'_N"/>
    <property type="match status" value="1"/>
</dbReference>
<dbReference type="FunFam" id="1.10.132.30:FF:000003">
    <property type="entry name" value="DNA-directed RNA polymerase subunit beta"/>
    <property type="match status" value="1"/>
</dbReference>
<dbReference type="FunFam" id="1.10.150.390:FF:000002">
    <property type="entry name" value="DNA-directed RNA polymerase subunit beta"/>
    <property type="match status" value="1"/>
</dbReference>
<dbReference type="FunFam" id="1.10.40.90:FF:000001">
    <property type="entry name" value="DNA-directed RNA polymerase subunit beta"/>
    <property type="match status" value="1"/>
</dbReference>
<dbReference type="FunFam" id="4.10.860.120:FF:000001">
    <property type="entry name" value="DNA-directed RNA polymerase subunit beta"/>
    <property type="match status" value="1"/>
</dbReference>
<dbReference type="Gene3D" id="1.10.132.30">
    <property type="match status" value="1"/>
</dbReference>
<dbReference type="Gene3D" id="1.10.150.390">
    <property type="match status" value="1"/>
</dbReference>
<dbReference type="Gene3D" id="1.10.1790.20">
    <property type="match status" value="1"/>
</dbReference>
<dbReference type="Gene3D" id="1.10.40.90">
    <property type="match status" value="1"/>
</dbReference>
<dbReference type="Gene3D" id="2.40.40.20">
    <property type="match status" value="1"/>
</dbReference>
<dbReference type="Gene3D" id="2.40.50.100">
    <property type="match status" value="1"/>
</dbReference>
<dbReference type="Gene3D" id="4.10.860.120">
    <property type="entry name" value="RNA polymerase II, clamp domain"/>
    <property type="match status" value="1"/>
</dbReference>
<dbReference type="Gene3D" id="1.10.274.100">
    <property type="entry name" value="RNA polymerase Rpb1, domain 3"/>
    <property type="match status" value="1"/>
</dbReference>
<dbReference type="HAMAP" id="MF_01322">
    <property type="entry name" value="RNApol_bact_RpoC"/>
    <property type="match status" value="1"/>
</dbReference>
<dbReference type="InterPro" id="IPR045867">
    <property type="entry name" value="DNA-dir_RpoC_beta_prime"/>
</dbReference>
<dbReference type="InterPro" id="IPR012754">
    <property type="entry name" value="DNA-dir_RpoC_beta_prime_bact"/>
</dbReference>
<dbReference type="InterPro" id="IPR000722">
    <property type="entry name" value="RNA_pol_asu"/>
</dbReference>
<dbReference type="InterPro" id="IPR006592">
    <property type="entry name" value="RNA_pol_N"/>
</dbReference>
<dbReference type="InterPro" id="IPR007080">
    <property type="entry name" value="RNA_pol_Rpb1_1"/>
</dbReference>
<dbReference type="InterPro" id="IPR007066">
    <property type="entry name" value="RNA_pol_Rpb1_3"/>
</dbReference>
<dbReference type="InterPro" id="IPR042102">
    <property type="entry name" value="RNA_pol_Rpb1_3_sf"/>
</dbReference>
<dbReference type="InterPro" id="IPR007083">
    <property type="entry name" value="RNA_pol_Rpb1_4"/>
</dbReference>
<dbReference type="InterPro" id="IPR007081">
    <property type="entry name" value="RNA_pol_Rpb1_5"/>
</dbReference>
<dbReference type="InterPro" id="IPR044893">
    <property type="entry name" value="RNA_pol_Rpb1_clamp_domain"/>
</dbReference>
<dbReference type="InterPro" id="IPR038120">
    <property type="entry name" value="Rpb1_funnel_sf"/>
</dbReference>
<dbReference type="NCBIfam" id="TIGR02386">
    <property type="entry name" value="rpoC_TIGR"/>
    <property type="match status" value="1"/>
</dbReference>
<dbReference type="PANTHER" id="PTHR19376">
    <property type="entry name" value="DNA-DIRECTED RNA POLYMERASE"/>
    <property type="match status" value="1"/>
</dbReference>
<dbReference type="PANTHER" id="PTHR19376:SF54">
    <property type="entry name" value="DNA-DIRECTED RNA POLYMERASE SUBUNIT BETA"/>
    <property type="match status" value="1"/>
</dbReference>
<dbReference type="Pfam" id="PF04997">
    <property type="entry name" value="RNA_pol_Rpb1_1"/>
    <property type="match status" value="1"/>
</dbReference>
<dbReference type="Pfam" id="PF00623">
    <property type="entry name" value="RNA_pol_Rpb1_2"/>
    <property type="match status" value="1"/>
</dbReference>
<dbReference type="Pfam" id="PF04983">
    <property type="entry name" value="RNA_pol_Rpb1_3"/>
    <property type="match status" value="1"/>
</dbReference>
<dbReference type="Pfam" id="PF05000">
    <property type="entry name" value="RNA_pol_Rpb1_4"/>
    <property type="match status" value="1"/>
</dbReference>
<dbReference type="Pfam" id="PF04998">
    <property type="entry name" value="RNA_pol_Rpb1_5"/>
    <property type="match status" value="1"/>
</dbReference>
<dbReference type="SMART" id="SM00663">
    <property type="entry name" value="RPOLA_N"/>
    <property type="match status" value="1"/>
</dbReference>
<dbReference type="SUPFAM" id="SSF64484">
    <property type="entry name" value="beta and beta-prime subunits of DNA dependent RNA-polymerase"/>
    <property type="match status" value="1"/>
</dbReference>
<organism>
    <name type="scientific">Bacillus pumilus (strain SAFR-032)</name>
    <dbReference type="NCBI Taxonomy" id="315750"/>
    <lineage>
        <taxon>Bacteria</taxon>
        <taxon>Bacillati</taxon>
        <taxon>Bacillota</taxon>
        <taxon>Bacilli</taxon>
        <taxon>Bacillales</taxon>
        <taxon>Bacillaceae</taxon>
        <taxon>Bacillus</taxon>
    </lineage>
</organism>
<reference key="1">
    <citation type="journal article" date="2007" name="PLoS ONE">
        <title>Paradoxical DNA repair and peroxide resistance gene conservation in Bacillus pumilus SAFR-032.</title>
        <authorList>
            <person name="Gioia J."/>
            <person name="Yerrapragada S."/>
            <person name="Qin X."/>
            <person name="Jiang H."/>
            <person name="Igboeli O.C."/>
            <person name="Muzny D."/>
            <person name="Dugan-Rocha S."/>
            <person name="Ding Y."/>
            <person name="Hawes A."/>
            <person name="Liu W."/>
            <person name="Perez L."/>
            <person name="Kovar C."/>
            <person name="Dinh H."/>
            <person name="Lee S."/>
            <person name="Nazareth L."/>
            <person name="Blyth P."/>
            <person name="Holder M."/>
            <person name="Buhay C."/>
            <person name="Tirumalai M.R."/>
            <person name="Liu Y."/>
            <person name="Dasgupta I."/>
            <person name="Bokhetache L."/>
            <person name="Fujita M."/>
            <person name="Karouia F."/>
            <person name="Eswara Moorthy P."/>
            <person name="Siefert J."/>
            <person name="Uzman A."/>
            <person name="Buzumbo P."/>
            <person name="Verma A."/>
            <person name="Zwiya H."/>
            <person name="McWilliams B.D."/>
            <person name="Olowu A."/>
            <person name="Clinkenbeard K.D."/>
            <person name="Newcombe D."/>
            <person name="Golebiewski L."/>
            <person name="Petrosino J.F."/>
            <person name="Nicholson W.L."/>
            <person name="Fox G.E."/>
            <person name="Venkateswaran K."/>
            <person name="Highlander S.K."/>
            <person name="Weinstock G.M."/>
        </authorList>
    </citation>
    <scope>NUCLEOTIDE SEQUENCE [LARGE SCALE GENOMIC DNA]</scope>
    <source>
        <strain>SAFR-032</strain>
    </source>
</reference>